<keyword id="KW-0596">Phosphopantetheine</keyword>
<keyword id="KW-0597">Phosphoprotein</keyword>
<keyword id="KW-0808">Transferase</keyword>
<comment type="function">
    <text evidence="3">Inactive atromentin synthetase homolog. Does not accept 4-hydroxyphenylpyruvate (4-HPP) as substrate.</text>
</comment>
<comment type="similarity">
    <text evidence="4">Belongs to the ATP-dependent AMP-binding enzyme family.</text>
</comment>
<sequence length="950" mass="105001">MNPVAVTSVAPVDIIHDLRHSEHATEASPITLLHVFSRAVSQYPNHELNFITSSAHDSIHTKTFTEFDQYVRALAQAMLAWGKPAGSVIVVYLTEHEDNMAAIWASLFAGYVPCLQPALSAQQAHKEGHVAHIKNLFSSATWLTNESGAEQVQSIPGLDIHLLSELQASAETVSVDFQTHQPHLDDEAILFLTSGSTGFSKAVVHTHRTILAGCNAKGQSYGLTSESKIMNWVGFDHVVGSLGMHITPLLCGASQLHVHASAILSDSLRFLHLIEEKSIQLVFAPNFLLAKLTRDLEKRSDLFGKFDLSSIKRINSGGEAVVSSTAQAFARTLKNLAKDGDASFVFSTGFGMTETGAGCIYDTIDVLGTSPPHEFLEIGTPVAGCEMRIVNPEDGVTPRPDGESGELQVRGPMVFVRYYNNPETTSSSFVEGGWYRTGDVGIFEKGKMRLSGRIKDTVVVHGVSYGIPELETYLQTVEGVAHSFLVAAPYRAPGQETEGFVVFYSPTFDLDSEDAPAKLYATHRALRDVSVKLITLPPQQIIPLTLNQMEKSTLGKLSRARLLNLFKQGELAKYIIRAEELLGIARGANFVAPSTETEKTLAGIYAGIFHLSVSDISTSENFFEFGGTSIDAIRLKREAESAFDLSEIPTIQIFKHPEIITLAKYVDSLVSKDASEEEYDPIVPLQLTGKKTPIFMVHPGIGEVLIFVNLAKYFQNERPFYALRARGFEAGQPCFTSLDEMVSCYAAAIKRTQPHGPYAIAGYSYGGVIAFEVAKRLEVMGSEVQFTGIIDMIPHHMPRSDWTGGLLILSYFLGLVSKQDTNDLAPSMRPLARTEQFEMVWKLSPPERLVELQLTLEKLEHWVNVADSVREFAKKYEACSSVSVLDVFYAIPVRGTKEDWFNNHIKRWASYSRAEPSYVDVPGHHYTLMDFDHVPRFQKIFRARLEARGL</sequence>
<evidence type="ECO:0000255" key="1"/>
<evidence type="ECO:0000255" key="2">
    <source>
        <dbReference type="PROSITE-ProRule" id="PRU00258"/>
    </source>
</evidence>
<evidence type="ECO:0000269" key="3">
    <source>
    </source>
</evidence>
<evidence type="ECO:0000305" key="4"/>
<protein>
    <recommendedName>
        <fullName>Inactive atromentin synthetase invA4</fullName>
    </recommendedName>
    <alternativeName>
        <fullName>Nonribosomal peptide synthase-like enzyme invA4</fullName>
        <shortName>NRPS-like</shortName>
    </alternativeName>
</protein>
<gene>
    <name type="primary">invA4</name>
</gene>
<reference key="1">
    <citation type="journal article" date="2015" name="Chem. Biol.">
        <title>Three redundant synthetases secure redox-active pigment production in the basidiomycete Paxillus involutus.</title>
        <authorList>
            <person name="Braesel J."/>
            <person name="Gotze S."/>
            <person name="Shah F."/>
            <person name="Heine D."/>
            <person name="Tauber J."/>
            <person name="Hertweck C."/>
            <person name="Tunlid A."/>
            <person name="Stallforth P."/>
            <person name="Hoffmeister D."/>
        </authorList>
    </citation>
    <scope>NUCLEOTIDE SEQUENCE [MRNA]</scope>
    <scope>FUNCTION</scope>
    <source>
        <strain>ATCC MYA-4647</strain>
    </source>
</reference>
<dbReference type="EMBL" id="KT958232">
    <property type="protein sequence ID" value="ALN66884.1"/>
    <property type="molecule type" value="mRNA"/>
</dbReference>
<dbReference type="SMR" id="A0A0S2E7X0"/>
<dbReference type="ESTHER" id="paxin-inva4">
    <property type="family name" value="Thioesterase"/>
</dbReference>
<dbReference type="GO" id="GO:0016878">
    <property type="term" value="F:acid-thiol ligase activity"/>
    <property type="evidence" value="ECO:0007669"/>
    <property type="project" value="UniProtKB-ARBA"/>
</dbReference>
<dbReference type="GO" id="GO:0031177">
    <property type="term" value="F:phosphopantetheine binding"/>
    <property type="evidence" value="ECO:0007669"/>
    <property type="project" value="InterPro"/>
</dbReference>
<dbReference type="GO" id="GO:0016740">
    <property type="term" value="F:transferase activity"/>
    <property type="evidence" value="ECO:0007669"/>
    <property type="project" value="UniProtKB-KW"/>
</dbReference>
<dbReference type="GO" id="GO:0009058">
    <property type="term" value="P:biosynthetic process"/>
    <property type="evidence" value="ECO:0007669"/>
    <property type="project" value="InterPro"/>
</dbReference>
<dbReference type="Gene3D" id="3.30.300.30">
    <property type="match status" value="1"/>
</dbReference>
<dbReference type="Gene3D" id="1.10.1200.10">
    <property type="entry name" value="ACP-like"/>
    <property type="match status" value="1"/>
</dbReference>
<dbReference type="Gene3D" id="3.40.50.1820">
    <property type="entry name" value="alpha/beta hydrolase"/>
    <property type="match status" value="1"/>
</dbReference>
<dbReference type="Gene3D" id="3.40.50.12780">
    <property type="entry name" value="N-terminal domain of ligase-like"/>
    <property type="match status" value="1"/>
</dbReference>
<dbReference type="InterPro" id="IPR029058">
    <property type="entry name" value="AB_hydrolase_fold"/>
</dbReference>
<dbReference type="InterPro" id="IPR036736">
    <property type="entry name" value="ACP-like_sf"/>
</dbReference>
<dbReference type="InterPro" id="IPR045851">
    <property type="entry name" value="AMP-bd_C_sf"/>
</dbReference>
<dbReference type="InterPro" id="IPR020845">
    <property type="entry name" value="AMP-binding_CS"/>
</dbReference>
<dbReference type="InterPro" id="IPR000873">
    <property type="entry name" value="AMP-dep_synth/lig_dom"/>
</dbReference>
<dbReference type="InterPro" id="IPR042099">
    <property type="entry name" value="ANL_N_sf"/>
</dbReference>
<dbReference type="InterPro" id="IPR050237">
    <property type="entry name" value="ATP-dep_AMP-bd_enzyme"/>
</dbReference>
<dbReference type="InterPro" id="IPR020806">
    <property type="entry name" value="PKS_PP-bd"/>
</dbReference>
<dbReference type="InterPro" id="IPR020802">
    <property type="entry name" value="PKS_thioesterase"/>
</dbReference>
<dbReference type="InterPro" id="IPR009081">
    <property type="entry name" value="PP-bd_ACP"/>
</dbReference>
<dbReference type="InterPro" id="IPR001031">
    <property type="entry name" value="Thioesterase"/>
</dbReference>
<dbReference type="PANTHER" id="PTHR43767">
    <property type="entry name" value="LONG-CHAIN-FATTY-ACID--COA LIGASE"/>
    <property type="match status" value="1"/>
</dbReference>
<dbReference type="PANTHER" id="PTHR43767:SF1">
    <property type="entry name" value="NONRIBOSOMAL PEPTIDE SYNTHASE PES1 (EUROFUNG)-RELATED"/>
    <property type="match status" value="1"/>
</dbReference>
<dbReference type="Pfam" id="PF00501">
    <property type="entry name" value="AMP-binding"/>
    <property type="match status" value="1"/>
</dbReference>
<dbReference type="Pfam" id="PF00550">
    <property type="entry name" value="PP-binding"/>
    <property type="match status" value="1"/>
</dbReference>
<dbReference type="Pfam" id="PF00975">
    <property type="entry name" value="Thioesterase"/>
    <property type="match status" value="1"/>
</dbReference>
<dbReference type="SMART" id="SM00823">
    <property type="entry name" value="PKS_PP"/>
    <property type="match status" value="1"/>
</dbReference>
<dbReference type="SMART" id="SM00824">
    <property type="entry name" value="PKS_TE"/>
    <property type="match status" value="1"/>
</dbReference>
<dbReference type="SUPFAM" id="SSF56801">
    <property type="entry name" value="Acetyl-CoA synthetase-like"/>
    <property type="match status" value="1"/>
</dbReference>
<dbReference type="SUPFAM" id="SSF47336">
    <property type="entry name" value="ACP-like"/>
    <property type="match status" value="1"/>
</dbReference>
<dbReference type="SUPFAM" id="SSF53474">
    <property type="entry name" value="alpha/beta-Hydrolases"/>
    <property type="match status" value="1"/>
</dbReference>
<dbReference type="PROSITE" id="PS00455">
    <property type="entry name" value="AMP_BINDING"/>
    <property type="match status" value="1"/>
</dbReference>
<dbReference type="PROSITE" id="PS50075">
    <property type="entry name" value="CARRIER"/>
    <property type="match status" value="1"/>
</dbReference>
<feature type="chain" id="PRO_0000442623" description="Inactive atromentin synthetase invA4">
    <location>
        <begin position="1"/>
        <end position="950"/>
    </location>
</feature>
<feature type="domain" description="Carrier" evidence="2">
    <location>
        <begin position="592"/>
        <end position="670"/>
    </location>
</feature>
<feature type="region of interest" description="Adenylation (A) domain" evidence="1">
    <location>
        <begin position="37"/>
        <end position="460"/>
    </location>
</feature>
<feature type="region of interest" description="Thiolation and peptide carrier (T) domain" evidence="1">
    <location>
        <begin position="597"/>
        <end position="667"/>
    </location>
</feature>
<feature type="region of interest" description="Thioesterase (TE) domain" evidence="1">
    <location>
        <begin position="693"/>
        <end position="797"/>
    </location>
</feature>
<feature type="modified residue" description="O-(pantetheine 4'-phosphoryl)serine" evidence="2">
    <location>
        <position position="629"/>
    </location>
</feature>
<name>INVA4_PAXIN</name>
<organism>
    <name type="scientific">Paxillus involutus</name>
    <name type="common">Naked brimcap</name>
    <dbReference type="NCBI Taxonomy" id="71150"/>
    <lineage>
        <taxon>Eukaryota</taxon>
        <taxon>Fungi</taxon>
        <taxon>Dikarya</taxon>
        <taxon>Basidiomycota</taxon>
        <taxon>Agaricomycotina</taxon>
        <taxon>Agaricomycetes</taxon>
        <taxon>Agaricomycetidae</taxon>
        <taxon>Boletales</taxon>
        <taxon>Paxilineae</taxon>
        <taxon>Paxillaceae</taxon>
        <taxon>Paxillus</taxon>
    </lineage>
</organism>
<proteinExistence type="evidence at transcript level"/>
<accession>A0A0S2E7X0</accession>